<comment type="function">
    <text evidence="1">Increases the formation of ribosomal termination complexes and stimulates activities of RF-1 and RF-2. It binds guanine nucleotides and has strong preference for UGA stop codons. It may interact directly with the ribosome. The stimulation of RF-1 and RF-2 is significantly reduced by GTP and GDP, but not by GMP.</text>
</comment>
<comment type="subcellular location">
    <subcellularLocation>
        <location evidence="1">Cytoplasm</location>
    </subcellularLocation>
</comment>
<comment type="similarity">
    <text evidence="1">Belongs to the TRAFAC class translation factor GTPase superfamily. Classic translation factor GTPase family. PrfC subfamily.</text>
</comment>
<name>RF3_STAA8</name>
<organism>
    <name type="scientific">Staphylococcus aureus (strain NCTC 8325 / PS 47)</name>
    <dbReference type="NCBI Taxonomy" id="93061"/>
    <lineage>
        <taxon>Bacteria</taxon>
        <taxon>Bacillati</taxon>
        <taxon>Bacillota</taxon>
        <taxon>Bacilli</taxon>
        <taxon>Bacillales</taxon>
        <taxon>Staphylococcaceae</taxon>
        <taxon>Staphylococcus</taxon>
    </lineage>
</organism>
<evidence type="ECO:0000255" key="1">
    <source>
        <dbReference type="HAMAP-Rule" id="MF_00072"/>
    </source>
</evidence>
<accession>Q2FZP4</accession>
<gene>
    <name evidence="1" type="primary">prfC</name>
    <name type="ordered locus">SAOUHSC_00956</name>
</gene>
<sequence length="520" mass="59602">MNLKQEVESRKTFAIISHPDAGKTTLTEKLLYFSGAIREAGTVKGKKTGKFATSDWMKVEQERGISVTSSVMQFDYDDYKINILDTPGHEDFSEDTYRTLMAVDSAVMVIDCAKGIEPQTLKLFKVCKMRGIPIFTFINKLDRVGKEPFELLDEIEETLNIETYPMNWPIGMGQSFFGIIDRKSKTIEPFRDEENILHLNDDFELEEDHAITNDSDFEQAIEELMLVEEAGEAFDNDALLSGDLTPVFFGSALANFGVQNFLNAYVDFAPMPNARQTKEDVEVSPFDDSFSGFIFKIQANMDPKHRDRIAFMRVVSGAFERGMDVTLQRTNKKQKITRSTSFMADDKETVNHAVAGDIIGLYDTGNYQIGDTLVGGKQTYSFQDLPQFTPEIFMKVSAKNVMKQKHFHKGIEQLVQEGAIQYYKTLHTNQIILGAVGQLQFEVFEHRMKNEYNVDVVMEPVGRKIARWIENEDQITDKMNTSRSILVKDRYDDLVFLFENEFATRWFEEKFPEIKLYSLL</sequence>
<proteinExistence type="inferred from homology"/>
<feature type="chain" id="PRO_1000023683" description="Peptide chain release factor 3">
    <location>
        <begin position="1"/>
        <end position="520"/>
    </location>
</feature>
<feature type="domain" description="tr-type G">
    <location>
        <begin position="8"/>
        <end position="277"/>
    </location>
</feature>
<feature type="binding site" evidence="1">
    <location>
        <begin position="17"/>
        <end position="24"/>
    </location>
    <ligand>
        <name>GTP</name>
        <dbReference type="ChEBI" id="CHEBI:37565"/>
    </ligand>
</feature>
<feature type="binding site" evidence="1">
    <location>
        <begin position="85"/>
        <end position="89"/>
    </location>
    <ligand>
        <name>GTP</name>
        <dbReference type="ChEBI" id="CHEBI:37565"/>
    </ligand>
</feature>
<feature type="binding site" evidence="1">
    <location>
        <begin position="139"/>
        <end position="142"/>
    </location>
    <ligand>
        <name>GTP</name>
        <dbReference type="ChEBI" id="CHEBI:37565"/>
    </ligand>
</feature>
<keyword id="KW-0963">Cytoplasm</keyword>
<keyword id="KW-0342">GTP-binding</keyword>
<keyword id="KW-0547">Nucleotide-binding</keyword>
<keyword id="KW-0648">Protein biosynthesis</keyword>
<keyword id="KW-1185">Reference proteome</keyword>
<reference key="1">
    <citation type="book" date="2006" name="Gram positive pathogens, 2nd edition">
        <title>The Staphylococcus aureus NCTC 8325 genome.</title>
        <editorList>
            <person name="Fischetti V."/>
            <person name="Novick R."/>
            <person name="Ferretti J."/>
            <person name="Portnoy D."/>
            <person name="Rood J."/>
        </editorList>
        <authorList>
            <person name="Gillaspy A.F."/>
            <person name="Worrell V."/>
            <person name="Orvis J."/>
            <person name="Roe B.A."/>
            <person name="Dyer D.W."/>
            <person name="Iandolo J.J."/>
        </authorList>
    </citation>
    <scope>NUCLEOTIDE SEQUENCE [LARGE SCALE GENOMIC DNA]</scope>
    <source>
        <strain>NCTC 8325 / PS 47</strain>
    </source>
</reference>
<protein>
    <recommendedName>
        <fullName evidence="1">Peptide chain release factor 3</fullName>
        <shortName evidence="1">RF-3</shortName>
    </recommendedName>
</protein>
<dbReference type="EMBL" id="CP000253">
    <property type="protein sequence ID" value="ABD30081.1"/>
    <property type="molecule type" value="Genomic_DNA"/>
</dbReference>
<dbReference type="RefSeq" id="WP_001049959.1">
    <property type="nucleotide sequence ID" value="NZ_LS483365.1"/>
</dbReference>
<dbReference type="RefSeq" id="YP_499509.1">
    <property type="nucleotide sequence ID" value="NC_007795.1"/>
</dbReference>
<dbReference type="SMR" id="Q2FZP4"/>
<dbReference type="STRING" id="93061.SAOUHSC_00956"/>
<dbReference type="PaxDb" id="1280-SAXN108_1017"/>
<dbReference type="GeneID" id="3920667"/>
<dbReference type="KEGG" id="sao:SAOUHSC_00956"/>
<dbReference type="PATRIC" id="fig|93061.5.peg.878"/>
<dbReference type="eggNOG" id="COG4108">
    <property type="taxonomic scope" value="Bacteria"/>
</dbReference>
<dbReference type="HOGENOM" id="CLU_002794_2_1_9"/>
<dbReference type="OrthoDB" id="9804431at2"/>
<dbReference type="PRO" id="PR:Q2FZP4"/>
<dbReference type="Proteomes" id="UP000008816">
    <property type="component" value="Chromosome"/>
</dbReference>
<dbReference type="GO" id="GO:0005829">
    <property type="term" value="C:cytosol"/>
    <property type="evidence" value="ECO:0000318"/>
    <property type="project" value="GO_Central"/>
</dbReference>
<dbReference type="GO" id="GO:0005525">
    <property type="term" value="F:GTP binding"/>
    <property type="evidence" value="ECO:0007669"/>
    <property type="project" value="UniProtKB-UniRule"/>
</dbReference>
<dbReference type="GO" id="GO:0003924">
    <property type="term" value="F:GTPase activity"/>
    <property type="evidence" value="ECO:0007669"/>
    <property type="project" value="InterPro"/>
</dbReference>
<dbReference type="GO" id="GO:0016150">
    <property type="term" value="F:translation release factor activity, codon nonspecific"/>
    <property type="evidence" value="ECO:0000318"/>
    <property type="project" value="GO_Central"/>
</dbReference>
<dbReference type="GO" id="GO:0016149">
    <property type="term" value="F:translation release factor activity, codon specific"/>
    <property type="evidence" value="ECO:0007669"/>
    <property type="project" value="UniProtKB-UniRule"/>
</dbReference>
<dbReference type="GO" id="GO:0006449">
    <property type="term" value="P:regulation of translational termination"/>
    <property type="evidence" value="ECO:0007669"/>
    <property type="project" value="UniProtKB-UniRule"/>
</dbReference>
<dbReference type="GO" id="GO:0006415">
    <property type="term" value="P:translational termination"/>
    <property type="evidence" value="ECO:0000318"/>
    <property type="project" value="GO_Central"/>
</dbReference>
<dbReference type="CDD" id="cd04169">
    <property type="entry name" value="RF3"/>
    <property type="match status" value="1"/>
</dbReference>
<dbReference type="CDD" id="cd16259">
    <property type="entry name" value="RF3_III"/>
    <property type="match status" value="1"/>
</dbReference>
<dbReference type="FunFam" id="2.40.30.10:FF:000040">
    <property type="entry name" value="Peptide chain release factor 3"/>
    <property type="match status" value="1"/>
</dbReference>
<dbReference type="FunFam" id="3.30.70.3280:FF:000001">
    <property type="entry name" value="Peptide chain release factor 3"/>
    <property type="match status" value="1"/>
</dbReference>
<dbReference type="FunFam" id="3.40.50.300:FF:000542">
    <property type="entry name" value="Peptide chain release factor 3"/>
    <property type="match status" value="1"/>
</dbReference>
<dbReference type="Gene3D" id="3.40.50.300">
    <property type="entry name" value="P-loop containing nucleotide triphosphate hydrolases"/>
    <property type="match status" value="1"/>
</dbReference>
<dbReference type="Gene3D" id="3.30.70.3280">
    <property type="entry name" value="Peptide chain release factor 3, domain III"/>
    <property type="match status" value="1"/>
</dbReference>
<dbReference type="Gene3D" id="2.40.30.10">
    <property type="entry name" value="Translation factors"/>
    <property type="match status" value="1"/>
</dbReference>
<dbReference type="HAMAP" id="MF_00072">
    <property type="entry name" value="Rel_fac_3"/>
    <property type="match status" value="1"/>
</dbReference>
<dbReference type="InterPro" id="IPR053905">
    <property type="entry name" value="EF-G-like_DII"/>
</dbReference>
<dbReference type="InterPro" id="IPR035647">
    <property type="entry name" value="EFG_III/V"/>
</dbReference>
<dbReference type="InterPro" id="IPR031157">
    <property type="entry name" value="G_TR_CS"/>
</dbReference>
<dbReference type="InterPro" id="IPR027417">
    <property type="entry name" value="P-loop_NTPase"/>
</dbReference>
<dbReference type="InterPro" id="IPR004548">
    <property type="entry name" value="PrfC"/>
</dbReference>
<dbReference type="InterPro" id="IPR032090">
    <property type="entry name" value="RF3_C"/>
</dbReference>
<dbReference type="InterPro" id="IPR038467">
    <property type="entry name" value="RF3_dom_3_sf"/>
</dbReference>
<dbReference type="InterPro" id="IPR041732">
    <property type="entry name" value="RF3_GTP-bd"/>
</dbReference>
<dbReference type="InterPro" id="IPR005225">
    <property type="entry name" value="Small_GTP-bd"/>
</dbReference>
<dbReference type="InterPro" id="IPR000795">
    <property type="entry name" value="T_Tr_GTP-bd_dom"/>
</dbReference>
<dbReference type="InterPro" id="IPR009000">
    <property type="entry name" value="Transl_B-barrel_sf"/>
</dbReference>
<dbReference type="NCBIfam" id="TIGR00503">
    <property type="entry name" value="prfC"/>
    <property type="match status" value="1"/>
</dbReference>
<dbReference type="NCBIfam" id="NF001964">
    <property type="entry name" value="PRK00741.1"/>
    <property type="match status" value="1"/>
</dbReference>
<dbReference type="NCBIfam" id="TIGR00231">
    <property type="entry name" value="small_GTP"/>
    <property type="match status" value="1"/>
</dbReference>
<dbReference type="PANTHER" id="PTHR43556">
    <property type="entry name" value="PEPTIDE CHAIN RELEASE FACTOR RF3"/>
    <property type="match status" value="1"/>
</dbReference>
<dbReference type="PANTHER" id="PTHR43556:SF2">
    <property type="entry name" value="PEPTIDE CHAIN RELEASE FACTOR RF3"/>
    <property type="match status" value="1"/>
</dbReference>
<dbReference type="Pfam" id="PF22042">
    <property type="entry name" value="EF-G_D2"/>
    <property type="match status" value="1"/>
</dbReference>
<dbReference type="Pfam" id="PF00009">
    <property type="entry name" value="GTP_EFTU"/>
    <property type="match status" value="1"/>
</dbReference>
<dbReference type="Pfam" id="PF16658">
    <property type="entry name" value="RF3_C"/>
    <property type="match status" value="1"/>
</dbReference>
<dbReference type="PRINTS" id="PR00315">
    <property type="entry name" value="ELONGATNFCT"/>
</dbReference>
<dbReference type="SUPFAM" id="SSF54980">
    <property type="entry name" value="EF-G C-terminal domain-like"/>
    <property type="match status" value="1"/>
</dbReference>
<dbReference type="SUPFAM" id="SSF52540">
    <property type="entry name" value="P-loop containing nucleoside triphosphate hydrolases"/>
    <property type="match status" value="1"/>
</dbReference>
<dbReference type="SUPFAM" id="SSF50447">
    <property type="entry name" value="Translation proteins"/>
    <property type="match status" value="1"/>
</dbReference>
<dbReference type="PROSITE" id="PS00301">
    <property type="entry name" value="G_TR_1"/>
    <property type="match status" value="1"/>
</dbReference>
<dbReference type="PROSITE" id="PS51722">
    <property type="entry name" value="G_TR_2"/>
    <property type="match status" value="1"/>
</dbReference>